<proteinExistence type="evidence at transcript level"/>
<keyword id="KW-0963">Cytoplasm</keyword>
<keyword id="KW-0520">NAD</keyword>
<keyword id="KW-0560">Oxidoreductase</keyword>
<name>LDHA_COLLI</name>
<dbReference type="EC" id="1.1.1.27" evidence="2"/>
<dbReference type="EMBL" id="L76362">
    <property type="protein sequence ID" value="AAD46976.1"/>
    <property type="molecule type" value="mRNA"/>
</dbReference>
<dbReference type="SMR" id="Q9PW07"/>
<dbReference type="eggNOG" id="KOG1495">
    <property type="taxonomic scope" value="Eukaryota"/>
</dbReference>
<dbReference type="UniPathway" id="UPA00554">
    <property type="reaction ID" value="UER00611"/>
</dbReference>
<dbReference type="GO" id="GO:0005737">
    <property type="term" value="C:cytoplasm"/>
    <property type="evidence" value="ECO:0007669"/>
    <property type="project" value="UniProtKB-SubCell"/>
</dbReference>
<dbReference type="GO" id="GO:0004459">
    <property type="term" value="F:L-lactate dehydrogenase activity"/>
    <property type="evidence" value="ECO:0007669"/>
    <property type="project" value="UniProtKB-EC"/>
</dbReference>
<dbReference type="GO" id="GO:0006089">
    <property type="term" value="P:lactate metabolic process"/>
    <property type="evidence" value="ECO:0007669"/>
    <property type="project" value="TreeGrafter"/>
</dbReference>
<dbReference type="CDD" id="cd05293">
    <property type="entry name" value="LDH_1"/>
    <property type="match status" value="1"/>
</dbReference>
<dbReference type="FunFam" id="3.40.50.720:FF:000029">
    <property type="entry name" value="L-lactate dehydrogenase A chain"/>
    <property type="match status" value="1"/>
</dbReference>
<dbReference type="FunFam" id="3.90.110.10:FF:000003">
    <property type="entry name" value="L-lactate dehydrogenase A chain"/>
    <property type="match status" value="1"/>
</dbReference>
<dbReference type="Gene3D" id="3.90.110.10">
    <property type="entry name" value="Lactate dehydrogenase/glycoside hydrolase, family 4, C-terminal"/>
    <property type="match status" value="1"/>
</dbReference>
<dbReference type="Gene3D" id="3.40.50.720">
    <property type="entry name" value="NAD(P)-binding Rossmann-like Domain"/>
    <property type="match status" value="1"/>
</dbReference>
<dbReference type="HAMAP" id="MF_00488">
    <property type="entry name" value="Lactate_dehydrog"/>
    <property type="match status" value="1"/>
</dbReference>
<dbReference type="InterPro" id="IPR001557">
    <property type="entry name" value="L-lactate/malate_DH"/>
</dbReference>
<dbReference type="InterPro" id="IPR011304">
    <property type="entry name" value="L-lactate_DH"/>
</dbReference>
<dbReference type="InterPro" id="IPR018177">
    <property type="entry name" value="L-lactate_DH_AS"/>
</dbReference>
<dbReference type="InterPro" id="IPR022383">
    <property type="entry name" value="Lactate/malate_DH_C"/>
</dbReference>
<dbReference type="InterPro" id="IPR001236">
    <property type="entry name" value="Lactate/malate_DH_N"/>
</dbReference>
<dbReference type="InterPro" id="IPR015955">
    <property type="entry name" value="Lactate_DH/Glyco_Ohase_4_C"/>
</dbReference>
<dbReference type="InterPro" id="IPR036291">
    <property type="entry name" value="NAD(P)-bd_dom_sf"/>
</dbReference>
<dbReference type="NCBIfam" id="TIGR01771">
    <property type="entry name" value="L-LDH-NAD"/>
    <property type="match status" value="1"/>
</dbReference>
<dbReference type="PANTHER" id="PTHR43128">
    <property type="entry name" value="L-2-HYDROXYCARBOXYLATE DEHYDROGENASE (NAD(P)(+))"/>
    <property type="match status" value="1"/>
</dbReference>
<dbReference type="PANTHER" id="PTHR43128:SF10">
    <property type="entry name" value="L-LACTATE DEHYDROGENASE A CHAIN"/>
    <property type="match status" value="1"/>
</dbReference>
<dbReference type="Pfam" id="PF02866">
    <property type="entry name" value="Ldh_1_C"/>
    <property type="match status" value="1"/>
</dbReference>
<dbReference type="Pfam" id="PF00056">
    <property type="entry name" value="Ldh_1_N"/>
    <property type="match status" value="1"/>
</dbReference>
<dbReference type="PIRSF" id="PIRSF000102">
    <property type="entry name" value="Lac_mal_DH"/>
    <property type="match status" value="1"/>
</dbReference>
<dbReference type="PRINTS" id="PR00086">
    <property type="entry name" value="LLDHDRGNASE"/>
</dbReference>
<dbReference type="SUPFAM" id="SSF56327">
    <property type="entry name" value="LDH C-terminal domain-like"/>
    <property type="match status" value="1"/>
</dbReference>
<dbReference type="SUPFAM" id="SSF51735">
    <property type="entry name" value="NAD(P)-binding Rossmann-fold domains"/>
    <property type="match status" value="1"/>
</dbReference>
<dbReference type="PROSITE" id="PS00064">
    <property type="entry name" value="L_LDH"/>
    <property type="match status" value="1"/>
</dbReference>
<protein>
    <recommendedName>
        <fullName>L-lactate dehydrogenase A chain</fullName>
        <shortName>LDH-A</shortName>
        <ecNumber evidence="2">1.1.1.27</ecNumber>
    </recommendedName>
</protein>
<evidence type="ECO:0000250" key="1"/>
<evidence type="ECO:0000250" key="2">
    <source>
        <dbReference type="UniProtKB" id="P00338"/>
    </source>
</evidence>
<evidence type="ECO:0000305" key="3"/>
<reference key="1">
    <citation type="journal article" date="1997" name="Mol. Biol. Evol.">
        <title>The cDNA cloning and molecular evolution of reptile and pigeon lactate dehydrogenase isozymes.</title>
        <authorList>
            <person name="Mannen H."/>
            <person name="Tsoi S.C.-M."/>
            <person name="Krushkal J.S."/>
            <person name="Li W.-H."/>
            <person name="Li S.S.-L."/>
        </authorList>
    </citation>
    <scope>NUCLEOTIDE SEQUENCE [MRNA]</scope>
    <source>
        <tissue>Muscle</tissue>
    </source>
</reference>
<organism>
    <name type="scientific">Columba livia</name>
    <name type="common">Rock dove</name>
    <dbReference type="NCBI Taxonomy" id="8932"/>
    <lineage>
        <taxon>Eukaryota</taxon>
        <taxon>Metazoa</taxon>
        <taxon>Chordata</taxon>
        <taxon>Craniata</taxon>
        <taxon>Vertebrata</taxon>
        <taxon>Euteleostomi</taxon>
        <taxon>Archelosauria</taxon>
        <taxon>Archosauria</taxon>
        <taxon>Dinosauria</taxon>
        <taxon>Saurischia</taxon>
        <taxon>Theropoda</taxon>
        <taxon>Coelurosauria</taxon>
        <taxon>Aves</taxon>
        <taxon>Neognathae</taxon>
        <taxon>Neoaves</taxon>
        <taxon>Columbimorphae</taxon>
        <taxon>Columbiformes</taxon>
        <taxon>Columbidae</taxon>
        <taxon>Columba</taxon>
    </lineage>
</organism>
<gene>
    <name type="primary">LDHA</name>
</gene>
<feature type="initiator methionine" description="Removed" evidence="1">
    <location>
        <position position="1"/>
    </location>
</feature>
<feature type="chain" id="PRO_0000168421" description="L-lactate dehydrogenase A chain">
    <location>
        <begin position="2"/>
        <end position="332"/>
    </location>
</feature>
<feature type="active site" description="Proton acceptor" evidence="1">
    <location>
        <position position="193"/>
    </location>
</feature>
<feature type="binding site" evidence="1">
    <location>
        <begin position="29"/>
        <end position="57"/>
    </location>
    <ligand>
        <name>NAD(+)</name>
        <dbReference type="ChEBI" id="CHEBI:57540"/>
    </ligand>
</feature>
<feature type="binding site" evidence="1">
    <location>
        <position position="99"/>
    </location>
    <ligand>
        <name>NAD(+)</name>
        <dbReference type="ChEBI" id="CHEBI:57540"/>
    </ligand>
</feature>
<feature type="binding site" evidence="1">
    <location>
        <position position="106"/>
    </location>
    <ligand>
        <name>substrate</name>
    </ligand>
</feature>
<feature type="binding site" evidence="1">
    <location>
        <position position="138"/>
    </location>
    <ligand>
        <name>NAD(+)</name>
        <dbReference type="ChEBI" id="CHEBI:57540"/>
    </ligand>
</feature>
<feature type="binding site" evidence="1">
    <location>
        <position position="138"/>
    </location>
    <ligand>
        <name>substrate</name>
    </ligand>
</feature>
<feature type="binding site" evidence="1">
    <location>
        <position position="169"/>
    </location>
    <ligand>
        <name>substrate</name>
    </ligand>
</feature>
<feature type="binding site" evidence="1">
    <location>
        <position position="248"/>
    </location>
    <ligand>
        <name>substrate</name>
    </ligand>
</feature>
<accession>Q9PW07</accession>
<sequence length="332" mass="36527">MSLKDQLIHNVHKEEHSHAHNKISVVGVGAVGMACAISILMKDLADELALVDVVEDKLKGEMLDLQHGSLFLRTPKIVSGKDYSVTAHSKLVIVTAGARQQEGESRLNLVQRNVNIFKVIIPNVVKYSPDCKLLIVSNPVDILTYVAWKISGFPKHRVIGSGCNLDSARFRHLMGERLGIHPLSCHGWIVGEHGDSSVPVWSGVNVAGVSLKALHPDMGTDADKEHWKEVHKQVVDSAYEVIKLKGYTSWAIGLSVADLAETIMKNLRRVHPISTVVKGMHGIKEDVFLSVPCVLGSSGITDVVKMILKPEEEDKLRKSADTLWGIQKELQF</sequence>
<comment type="function">
    <text evidence="2">Interconverts simultaneously and stereospecifically pyruvate and lactate with concomitant interconversion of NADH and NAD(+).</text>
</comment>
<comment type="catalytic activity">
    <reaction evidence="2">
        <text>(S)-lactate + NAD(+) = pyruvate + NADH + H(+)</text>
        <dbReference type="Rhea" id="RHEA:23444"/>
        <dbReference type="ChEBI" id="CHEBI:15361"/>
        <dbReference type="ChEBI" id="CHEBI:15378"/>
        <dbReference type="ChEBI" id="CHEBI:16651"/>
        <dbReference type="ChEBI" id="CHEBI:57540"/>
        <dbReference type="ChEBI" id="CHEBI:57945"/>
        <dbReference type="EC" id="1.1.1.27"/>
    </reaction>
    <physiologicalReaction direction="left-to-right" evidence="2">
        <dbReference type="Rhea" id="RHEA:23445"/>
    </physiologicalReaction>
    <physiologicalReaction direction="right-to-left" evidence="2">
        <dbReference type="Rhea" id="RHEA:23446"/>
    </physiologicalReaction>
</comment>
<comment type="pathway">
    <text evidence="2">Fermentation; pyruvate fermentation to lactate; (S)-lactate from pyruvate: step 1/1.</text>
</comment>
<comment type="subunit">
    <text evidence="1">Homotetramer.</text>
</comment>
<comment type="subcellular location">
    <subcellularLocation>
        <location evidence="1">Cytoplasm</location>
    </subcellularLocation>
</comment>
<comment type="similarity">
    <text evidence="3">Belongs to the LDH/MDH superfamily. LDH family.</text>
</comment>